<sequence length="402" mass="43690">MALKSGEERLKEMEAEMALFEQEVLGGPVAPTVVEAVPVALAMPTLPMVRPIIGTNTYREVQQSLEARAATLVGPPPTFVCPAIPAVPPPQVLRPAFVPHVLQRPAGGHRMPMMRGPPPHGMIAPPLPRPPPPPPSMMAPPVVGPPQPPMAPVGPPMGPMPPVGGMNPMALGPPRSMTQAPAKITPSVIQAAPTVYTAPPVSKRIDLKSQKQARMEQLSALVAEQQAAVLAAGLLDSKKETASDDSVIGPSMPEPEPVHVEPVDTSTEDKKKGKQEKVKKCIRVAAGVSWEDTSLLEWETDDFRIFCGDLGNEVNDDILARAFSRYPSFLKAKVVRDKRTGKTKGYGFVSFKDPNDYVRAMREMNGRYVGSRPIKLRKSAWKDRNLEVVRKNQKEKKKLGLR</sequence>
<feature type="chain" id="PRO_0000307753" description="RNA-binding protein 42">
    <location>
        <begin position="1"/>
        <end position="402"/>
    </location>
</feature>
<feature type="domain" description="RRM" evidence="2">
    <location>
        <begin position="303"/>
        <end position="381"/>
    </location>
</feature>
<feature type="region of interest" description="Disordered" evidence="3">
    <location>
        <begin position="240"/>
        <end position="275"/>
    </location>
</feature>
<feature type="compositionally biased region" description="Basic and acidic residues" evidence="3">
    <location>
        <begin position="256"/>
        <end position="275"/>
    </location>
</feature>
<feature type="sequence conflict" description="In Ref. 1; AAT68116." evidence="4" ref="1">
    <original>Q</original>
    <variation>P</variation>
    <location>
        <position position="91"/>
    </location>
</feature>
<feature type="sequence conflict" description="In Ref. 1; AAT68116." evidence="4" ref="1">
    <original>D</original>
    <variation>E</variation>
    <location>
        <position position="236"/>
    </location>
</feature>
<feature type="sequence conflict" description="In Ref. 1; AAT68116." evidence="4" ref="1">
    <original>A</original>
    <variation>T</variation>
    <location>
        <position position="380"/>
    </location>
</feature>
<feature type="sequence conflict" description="In Ref. 1; AAT68116." evidence="4" ref="1">
    <original>N</original>
    <variation>K</variation>
    <location>
        <position position="392"/>
    </location>
</feature>
<organism>
    <name type="scientific">Danio rerio</name>
    <name type="common">Zebrafish</name>
    <name type="synonym">Brachydanio rerio</name>
    <dbReference type="NCBI Taxonomy" id="7955"/>
    <lineage>
        <taxon>Eukaryota</taxon>
        <taxon>Metazoa</taxon>
        <taxon>Chordata</taxon>
        <taxon>Craniata</taxon>
        <taxon>Vertebrata</taxon>
        <taxon>Euteleostomi</taxon>
        <taxon>Actinopterygii</taxon>
        <taxon>Neopterygii</taxon>
        <taxon>Teleostei</taxon>
        <taxon>Ostariophysi</taxon>
        <taxon>Cypriniformes</taxon>
        <taxon>Danionidae</taxon>
        <taxon>Danioninae</taxon>
        <taxon>Danio</taxon>
    </lineage>
</organism>
<dbReference type="EMBL" id="AY648798">
    <property type="protein sequence ID" value="AAT68116.1"/>
    <property type="molecule type" value="mRNA"/>
</dbReference>
<dbReference type="EMBL" id="BC095046">
    <property type="protein sequence ID" value="AAH95046.1"/>
    <property type="molecule type" value="mRNA"/>
</dbReference>
<dbReference type="RefSeq" id="NP_001003850.1">
    <property type="nucleotide sequence ID" value="NM_001003850.1"/>
</dbReference>
<dbReference type="SMR" id="Q6DRG1"/>
<dbReference type="FunCoup" id="Q6DRG1">
    <property type="interactions" value="1366"/>
</dbReference>
<dbReference type="STRING" id="7955.ENSDARP00000058379"/>
<dbReference type="PaxDb" id="7955-ENSDARP00000058379"/>
<dbReference type="GeneID" id="445360"/>
<dbReference type="KEGG" id="dre:445360"/>
<dbReference type="AGR" id="ZFIN:ZDB-GENE-040809-2"/>
<dbReference type="CTD" id="79171"/>
<dbReference type="ZFIN" id="ZDB-GENE-040809-2">
    <property type="gene designation" value="rbm42"/>
</dbReference>
<dbReference type="eggNOG" id="KOG0226">
    <property type="taxonomic scope" value="Eukaryota"/>
</dbReference>
<dbReference type="InParanoid" id="Q6DRG1"/>
<dbReference type="OrthoDB" id="1749473at2759"/>
<dbReference type="PhylomeDB" id="Q6DRG1"/>
<dbReference type="TreeFam" id="TF313946"/>
<dbReference type="PRO" id="PR:Q6DRG1"/>
<dbReference type="Proteomes" id="UP000000437">
    <property type="component" value="Chromosome 16"/>
</dbReference>
<dbReference type="GO" id="GO:0005737">
    <property type="term" value="C:cytoplasm"/>
    <property type="evidence" value="ECO:0007669"/>
    <property type="project" value="UniProtKB-SubCell"/>
</dbReference>
<dbReference type="GO" id="GO:0005634">
    <property type="term" value="C:nucleus"/>
    <property type="evidence" value="ECO:0007669"/>
    <property type="project" value="UniProtKB-SubCell"/>
</dbReference>
<dbReference type="GO" id="GO:0003729">
    <property type="term" value="F:mRNA binding"/>
    <property type="evidence" value="ECO:0000318"/>
    <property type="project" value="GO_Central"/>
</dbReference>
<dbReference type="GO" id="GO:0002088">
    <property type="term" value="P:lens development in camera-type eye"/>
    <property type="evidence" value="ECO:0000315"/>
    <property type="project" value="ZFIN"/>
</dbReference>
<dbReference type="CDD" id="cd12383">
    <property type="entry name" value="RRM_RBM42"/>
    <property type="match status" value="1"/>
</dbReference>
<dbReference type="Gene3D" id="3.30.70.330">
    <property type="match status" value="1"/>
</dbReference>
<dbReference type="InterPro" id="IPR012677">
    <property type="entry name" value="Nucleotide-bd_a/b_plait_sf"/>
</dbReference>
<dbReference type="InterPro" id="IPR035979">
    <property type="entry name" value="RBD_domain_sf"/>
</dbReference>
<dbReference type="InterPro" id="IPR050825">
    <property type="entry name" value="RBM42_RBP45_47-like"/>
</dbReference>
<dbReference type="InterPro" id="IPR034215">
    <property type="entry name" value="RBM42_RRM"/>
</dbReference>
<dbReference type="InterPro" id="IPR000504">
    <property type="entry name" value="RRM_dom"/>
</dbReference>
<dbReference type="PANTHER" id="PTHR47640:SF11">
    <property type="entry name" value="RNA-BINDING PROTEIN 42"/>
    <property type="match status" value="1"/>
</dbReference>
<dbReference type="PANTHER" id="PTHR47640">
    <property type="entry name" value="TRNA SELENOCYSTEINE 1-ASSOCIATED PROTEIN 1-RELATED-RELATED"/>
    <property type="match status" value="1"/>
</dbReference>
<dbReference type="Pfam" id="PF00076">
    <property type="entry name" value="RRM_1"/>
    <property type="match status" value="1"/>
</dbReference>
<dbReference type="SMART" id="SM00360">
    <property type="entry name" value="RRM"/>
    <property type="match status" value="1"/>
</dbReference>
<dbReference type="SUPFAM" id="SSF54928">
    <property type="entry name" value="RNA-binding domain, RBD"/>
    <property type="match status" value="1"/>
</dbReference>
<dbReference type="PROSITE" id="PS50102">
    <property type="entry name" value="RRM"/>
    <property type="match status" value="1"/>
</dbReference>
<gene>
    <name type="primary">rbm42</name>
</gene>
<comment type="function">
    <text evidence="1">May bind RNA.</text>
</comment>
<comment type="subcellular location">
    <subcellularLocation>
        <location evidence="1">Nucleus</location>
    </subcellularLocation>
    <subcellularLocation>
        <location evidence="1">Cytoplasm</location>
    </subcellularLocation>
</comment>
<comment type="similarity">
    <text evidence="4">Belongs to the RRM RBM42 family.</text>
</comment>
<accession>Q6DRG1</accession>
<accession>Q504F4</accession>
<name>RBM42_DANRE</name>
<reference key="1">
    <citation type="journal article" date="2004" name="Proc. Natl. Acad. Sci. U.S.A.">
        <title>Identification of 315 genes essential for early zebrafish development.</title>
        <authorList>
            <person name="Amsterdam A."/>
            <person name="Nissen R.M."/>
            <person name="Sun Z."/>
            <person name="Swindell E.C."/>
            <person name="Farrington S."/>
            <person name="Hopkins N."/>
        </authorList>
    </citation>
    <scope>NUCLEOTIDE SEQUENCE [LARGE SCALE MRNA]</scope>
    <source>
        <tissue>Embryo</tissue>
    </source>
</reference>
<reference key="2">
    <citation type="submission" date="2005-05" db="EMBL/GenBank/DDBJ databases">
        <authorList>
            <consortium name="NIH - Zebrafish Gene Collection (ZGC) project"/>
        </authorList>
    </citation>
    <scope>NUCLEOTIDE SEQUENCE [LARGE SCALE MRNA]</scope>
    <source>
        <tissue>Olfactory epithelium</tissue>
    </source>
</reference>
<proteinExistence type="evidence at transcript level"/>
<keyword id="KW-0963">Cytoplasm</keyword>
<keyword id="KW-0539">Nucleus</keyword>
<keyword id="KW-1185">Reference proteome</keyword>
<keyword id="KW-0694">RNA-binding</keyword>
<evidence type="ECO:0000250" key="1"/>
<evidence type="ECO:0000255" key="2">
    <source>
        <dbReference type="PROSITE-ProRule" id="PRU00176"/>
    </source>
</evidence>
<evidence type="ECO:0000256" key="3">
    <source>
        <dbReference type="SAM" id="MobiDB-lite"/>
    </source>
</evidence>
<evidence type="ECO:0000305" key="4"/>
<protein>
    <recommendedName>
        <fullName>RNA-binding protein 42</fullName>
    </recommendedName>
    <alternativeName>
        <fullName>RNA-binding motif protein 42</fullName>
    </alternativeName>
</protein>